<feature type="chain" id="PRO_0000069614" description="G-protein coupled receptor 135">
    <location>
        <begin position="1"/>
        <end position="457"/>
    </location>
</feature>
<feature type="topological domain" description="Extracellular" evidence="2">
    <location>
        <begin position="1"/>
        <end position="64"/>
    </location>
</feature>
<feature type="transmembrane region" description="Helical; Name=1" evidence="2">
    <location>
        <begin position="65"/>
        <end position="85"/>
    </location>
</feature>
<feature type="topological domain" description="Cytoplasmic" evidence="2">
    <location>
        <begin position="86"/>
        <end position="109"/>
    </location>
</feature>
<feature type="transmembrane region" description="Helical; Name=2" evidence="2">
    <location>
        <begin position="110"/>
        <end position="130"/>
    </location>
</feature>
<feature type="topological domain" description="Extracellular" evidence="2">
    <location>
        <begin position="131"/>
        <end position="156"/>
    </location>
</feature>
<feature type="transmembrane region" description="Helical; Name=3" evidence="2">
    <location>
        <begin position="157"/>
        <end position="177"/>
    </location>
</feature>
<feature type="topological domain" description="Cytoplasmic" evidence="2">
    <location>
        <begin position="178"/>
        <end position="189"/>
    </location>
</feature>
<feature type="transmembrane region" description="Helical; Name=4" evidence="2">
    <location>
        <begin position="190"/>
        <end position="210"/>
    </location>
</feature>
<feature type="topological domain" description="Extracellular" evidence="2">
    <location>
        <begin position="211"/>
        <end position="235"/>
    </location>
</feature>
<feature type="transmembrane region" description="Helical; Name=5" evidence="2">
    <location>
        <begin position="236"/>
        <end position="256"/>
    </location>
</feature>
<feature type="topological domain" description="Cytoplasmic" evidence="2">
    <location>
        <begin position="257"/>
        <end position="295"/>
    </location>
</feature>
<feature type="transmembrane region" description="Helical; Name=6" evidence="2">
    <location>
        <begin position="296"/>
        <end position="316"/>
    </location>
</feature>
<feature type="topological domain" description="Extracellular" evidence="2">
    <location>
        <begin position="317"/>
        <end position="329"/>
    </location>
</feature>
<feature type="transmembrane region" description="Helical; Name=7" evidence="2">
    <location>
        <begin position="330"/>
        <end position="350"/>
    </location>
</feature>
<feature type="topological domain" description="Cytoplasmic" evidence="2">
    <location>
        <begin position="351"/>
        <end position="457"/>
    </location>
</feature>
<feature type="region of interest" description="Disordered" evidence="4">
    <location>
        <begin position="1"/>
        <end position="27"/>
    </location>
</feature>
<feature type="glycosylation site" description="N-linked (GlcNAc...) asparagine" evidence="2">
    <location>
        <position position="47"/>
    </location>
</feature>
<sequence>MEEQARPPSRPAASATLPGSAHPGGAASTATAAALSFSSVATVTLGNQSDAGRPEAAGSRGPAPLLWHGAAVAAQALVLLLIFLLSSLGNCAVMGVIVKHRQLRTVTNAFILSLSLSDLLTALLCLPAAFLDLFAPPGDSGPWRSFCAASRFFSSCFGIVSTFSVALISLDRYCAIVRPPRDKLGRRRALQLLAGAWLAALGFSLPWELLRAPREPPTPQSFHRCLYRTSPDPAQLGAAYSVGLVVACYLLPFLLMCFCRYHICKTVRLSDVRVRPMTTYARVLRFFSEVRTATTVLIMIVFVICCWGPYCFLVLLAATRQGQTTQAPSLLNVAAVWLTWANGAINPVIYAIRNPNISMFLGRNREEGYRTRNMDVFLPSQGLGFQARSRNRLRNGCANRLGACSRMPSSNPASGSGGEVVMWARKNPVVLFFREDPPDPVMAVYKQHKSETRDSSI</sequence>
<organism>
    <name type="scientific">Rattus norvegicus</name>
    <name type="common">Rat</name>
    <dbReference type="NCBI Taxonomy" id="10116"/>
    <lineage>
        <taxon>Eukaryota</taxon>
        <taxon>Metazoa</taxon>
        <taxon>Chordata</taxon>
        <taxon>Craniata</taxon>
        <taxon>Vertebrata</taxon>
        <taxon>Euteleostomi</taxon>
        <taxon>Mammalia</taxon>
        <taxon>Eutheria</taxon>
        <taxon>Euarchontoglires</taxon>
        <taxon>Glires</taxon>
        <taxon>Rodentia</taxon>
        <taxon>Myomorpha</taxon>
        <taxon>Muroidea</taxon>
        <taxon>Muridae</taxon>
        <taxon>Murinae</taxon>
        <taxon>Rattus</taxon>
    </lineage>
</organism>
<reference key="1">
    <citation type="journal article" date="2003" name="FEBS Lett.">
        <title>Seven evolutionarily conserved human rhodopsin G protein-coupled receptors lacking close relatives.</title>
        <authorList>
            <person name="Fredriksson R."/>
            <person name="Hoeglund P.J."/>
            <person name="Gloriam D.E.I."/>
            <person name="Lagerstroem M.C."/>
            <person name="Schioeth H.B."/>
        </authorList>
    </citation>
    <scope>NUCLEOTIDE SEQUENCE [MRNA]</scope>
</reference>
<proteinExistence type="evidence at transcript level"/>
<evidence type="ECO:0000250" key="1">
    <source>
        <dbReference type="UniProtKB" id="Q8IZ08"/>
    </source>
</evidence>
<evidence type="ECO:0000255" key="2"/>
<evidence type="ECO:0000255" key="3">
    <source>
        <dbReference type="PROSITE-ProRule" id="PRU00521"/>
    </source>
</evidence>
<evidence type="ECO:0000256" key="4">
    <source>
        <dbReference type="SAM" id="MobiDB-lite"/>
    </source>
</evidence>
<keyword id="KW-1003">Cell membrane</keyword>
<keyword id="KW-0967">Endosome</keyword>
<keyword id="KW-0297">G-protein coupled receptor</keyword>
<keyword id="KW-0325">Glycoprotein</keyword>
<keyword id="KW-0472">Membrane</keyword>
<keyword id="KW-0675">Receptor</keyword>
<keyword id="KW-1185">Reference proteome</keyword>
<keyword id="KW-0807">Transducer</keyword>
<keyword id="KW-0812">Transmembrane</keyword>
<keyword id="KW-1133">Transmembrane helix</keyword>
<gene>
    <name type="primary">Gpr135</name>
</gene>
<protein>
    <recommendedName>
        <fullName>G-protein coupled receptor 135</fullName>
    </recommendedName>
</protein>
<name>GP135_RAT</name>
<comment type="function">
    <text evidence="1">Orphan receptor. Has spontaneous activity for beta-arrestin recruitment. Shows a reciprocal regulatory interaction with the melatonin receptor MTNR1B most likely through receptor heteromerization (By similarity).</text>
</comment>
<comment type="subunit">
    <text evidence="1">Interacts with MTNR1B (By similarity). Interacts with ARRB1 and ARRB2 in a spontaneous and agonist-independent manner; leading to the internalization of GPR135 in the endosomal compartment (By similarity).</text>
</comment>
<comment type="subcellular location">
    <subcellularLocation>
        <location evidence="1">Cell membrane</location>
        <topology evidence="2">Multi-pass membrane protein</topology>
    </subcellularLocation>
    <subcellularLocation>
        <location evidence="1">Endosome membrane</location>
        <topology evidence="2">Multi-pass membrane protein</topology>
    </subcellularLocation>
    <text evidence="1">Colocalizes with ARRB2/beta-arrestin-2 in the endosome.</text>
</comment>
<comment type="similarity">
    <text evidence="3">Belongs to the G-protein coupled receptor 1 family.</text>
</comment>
<dbReference type="EMBL" id="AY288430">
    <property type="protein sequence ID" value="AAP72139.1"/>
    <property type="molecule type" value="mRNA"/>
</dbReference>
<dbReference type="RefSeq" id="NP_861436.1">
    <property type="nucleotide sequence ID" value="NM_181771.2"/>
</dbReference>
<dbReference type="SMR" id="Q7TQN7"/>
<dbReference type="FunCoup" id="Q7TQN7">
    <property type="interactions" value="62"/>
</dbReference>
<dbReference type="STRING" id="10116.ENSRNOP00000005933"/>
<dbReference type="GlyCosmos" id="Q7TQN7">
    <property type="glycosylation" value="1 site, No reported glycans"/>
</dbReference>
<dbReference type="GlyGen" id="Q7TQN7">
    <property type="glycosylation" value="1 site"/>
</dbReference>
<dbReference type="PhosphoSitePlus" id="Q7TQN7"/>
<dbReference type="PaxDb" id="10116-ENSRNOP00000005933"/>
<dbReference type="Ensembl" id="ENSRNOT00000005933.3">
    <property type="protein sequence ID" value="ENSRNOP00000005933.2"/>
    <property type="gene ID" value="ENSRNOG00000004499.3"/>
</dbReference>
<dbReference type="GeneID" id="314213"/>
<dbReference type="KEGG" id="rno:314213"/>
<dbReference type="UCSC" id="RGD:727844">
    <property type="organism name" value="rat"/>
</dbReference>
<dbReference type="AGR" id="RGD:727844"/>
<dbReference type="CTD" id="64582"/>
<dbReference type="RGD" id="727844">
    <property type="gene designation" value="Gpr135"/>
</dbReference>
<dbReference type="eggNOG" id="KOG3656">
    <property type="taxonomic scope" value="Eukaryota"/>
</dbReference>
<dbReference type="GeneTree" id="ENSGT00950000182998"/>
<dbReference type="HOGENOM" id="CLU_048891_0_0_1"/>
<dbReference type="InParanoid" id="Q7TQN7"/>
<dbReference type="OMA" id="FFCRDAQ"/>
<dbReference type="OrthoDB" id="81278at9989"/>
<dbReference type="PhylomeDB" id="Q7TQN7"/>
<dbReference type="TreeFam" id="TF333332"/>
<dbReference type="PRO" id="PR:Q7TQN7"/>
<dbReference type="Proteomes" id="UP000002494">
    <property type="component" value="Chromosome 6"/>
</dbReference>
<dbReference type="Bgee" id="ENSRNOG00000004499">
    <property type="expression patterns" value="Expressed in frontal cortex and 6 other cell types or tissues"/>
</dbReference>
<dbReference type="GO" id="GO:0005768">
    <property type="term" value="C:endosome"/>
    <property type="evidence" value="ECO:0000266"/>
    <property type="project" value="RGD"/>
</dbReference>
<dbReference type="GO" id="GO:0010008">
    <property type="term" value="C:endosome membrane"/>
    <property type="evidence" value="ECO:0007669"/>
    <property type="project" value="UniProtKB-SubCell"/>
</dbReference>
<dbReference type="GO" id="GO:0005886">
    <property type="term" value="C:plasma membrane"/>
    <property type="evidence" value="ECO:0000266"/>
    <property type="project" value="RGD"/>
</dbReference>
<dbReference type="GO" id="GO:1990763">
    <property type="term" value="F:arrestin family protein binding"/>
    <property type="evidence" value="ECO:0000266"/>
    <property type="project" value="RGD"/>
</dbReference>
<dbReference type="GO" id="GO:0004930">
    <property type="term" value="F:G protein-coupled receptor activity"/>
    <property type="evidence" value="ECO:0000318"/>
    <property type="project" value="GO_Central"/>
</dbReference>
<dbReference type="GO" id="GO:0007186">
    <property type="term" value="P:G protein-coupled receptor signaling pathway"/>
    <property type="evidence" value="ECO:0000318"/>
    <property type="project" value="GO_Central"/>
</dbReference>
<dbReference type="FunFam" id="1.20.1070.10:FF:000280">
    <property type="entry name" value="probable G-protein coupled receptor 135"/>
    <property type="match status" value="1"/>
</dbReference>
<dbReference type="Gene3D" id="1.20.1070.10">
    <property type="entry name" value="Rhodopsin 7-helix transmembrane proteins"/>
    <property type="match status" value="1"/>
</dbReference>
<dbReference type="InterPro" id="IPR000276">
    <property type="entry name" value="GPCR_Rhodpsn"/>
</dbReference>
<dbReference type="InterPro" id="IPR017452">
    <property type="entry name" value="GPCR_Rhodpsn_7TM"/>
</dbReference>
<dbReference type="PANTHER" id="PTHR22752">
    <property type="entry name" value="G PROTEIN-COUPLED RECEPTOR"/>
    <property type="match status" value="1"/>
</dbReference>
<dbReference type="PANTHER" id="PTHR22752:SF3">
    <property type="entry name" value="G-PROTEIN COUPLED RECEPTOR 135"/>
    <property type="match status" value="1"/>
</dbReference>
<dbReference type="Pfam" id="PF00001">
    <property type="entry name" value="7tm_1"/>
    <property type="match status" value="1"/>
</dbReference>
<dbReference type="PRINTS" id="PR00237">
    <property type="entry name" value="GPCRRHODOPSN"/>
</dbReference>
<dbReference type="SUPFAM" id="SSF81321">
    <property type="entry name" value="Family A G protein-coupled receptor-like"/>
    <property type="match status" value="1"/>
</dbReference>
<dbReference type="PROSITE" id="PS00237">
    <property type="entry name" value="G_PROTEIN_RECEP_F1_1"/>
    <property type="match status" value="1"/>
</dbReference>
<dbReference type="PROSITE" id="PS50262">
    <property type="entry name" value="G_PROTEIN_RECEP_F1_2"/>
    <property type="match status" value="1"/>
</dbReference>
<accession>Q7TQN7</accession>